<keyword id="KW-0150">Chloroplast</keyword>
<keyword id="KW-0934">Plastid</keyword>
<keyword id="KW-0687">Ribonucleoprotein</keyword>
<keyword id="KW-0689">Ribosomal protein</keyword>
<keyword id="KW-0694">RNA-binding</keyword>
<keyword id="KW-0699">rRNA-binding</keyword>
<gene>
    <name type="primary">rps4</name>
</gene>
<name>RR4_AVEFL</name>
<organism>
    <name type="scientific">Avenella flexuosa</name>
    <name type="common">Wavy hair-grass</name>
    <name type="synonym">Deschampsia flexuosa</name>
    <dbReference type="NCBI Taxonomy" id="29672"/>
    <lineage>
        <taxon>Eukaryota</taxon>
        <taxon>Viridiplantae</taxon>
        <taxon>Streptophyta</taxon>
        <taxon>Embryophyta</taxon>
        <taxon>Tracheophyta</taxon>
        <taxon>Spermatophyta</taxon>
        <taxon>Magnoliopsida</taxon>
        <taxon>Liliopsida</taxon>
        <taxon>Poales</taxon>
        <taxon>Poaceae</taxon>
        <taxon>BOP clade</taxon>
        <taxon>Pooideae</taxon>
        <taxon>Poodae</taxon>
        <taxon>Poeae</taxon>
        <taxon>Poeae Chloroplast Group 2 (Poeae type)</taxon>
        <taxon>Airinae</taxon>
        <taxon>Avenella</taxon>
    </lineage>
</organism>
<reference key="1">
    <citation type="journal article" date="1994" name="Plant Syst. Evol.">
        <title>The chloroplast gene rps4 as a tool for the study of Poaceae phylogeny.</title>
        <authorList>
            <person name="Nadot S."/>
            <person name="Bajon R."/>
            <person name="Lejeune B."/>
        </authorList>
        <dbReference type="AGRICOLA" id="IND20417698"/>
    </citation>
    <scope>NUCLEOTIDE SEQUENCE [GENOMIC DNA]</scope>
</reference>
<comment type="function">
    <text evidence="1">One of the primary rRNA binding proteins, it binds directly to 16S rRNA where it nucleates assembly of the body of the 30S subunit.</text>
</comment>
<comment type="function">
    <text evidence="1">With S5 and S12 plays an important role in translational accuracy.</text>
</comment>
<comment type="subunit">
    <text evidence="1">Part of the 30S ribosomal subunit. Contacts protein S5. The interaction surface between S4 and S5 is involved in control of translational fidelity (By similarity).</text>
</comment>
<comment type="subcellular location">
    <subcellularLocation>
        <location>Plastid</location>
        <location>Chloroplast</location>
    </subcellularLocation>
</comment>
<comment type="similarity">
    <text evidence="3">Belongs to the universal ribosomal protein uS4 family.</text>
</comment>
<geneLocation type="chloroplast"/>
<feature type="chain" id="PRO_0000132566" description="Small ribosomal subunit protein uS4c">
    <location>
        <begin position="1"/>
        <end position="196" status="greater than"/>
    </location>
</feature>
<feature type="domain" description="S4 RNA-binding">
    <location>
        <begin position="89"/>
        <end position="169"/>
    </location>
</feature>
<feature type="region of interest" description="Disordered" evidence="2">
    <location>
        <begin position="16"/>
        <end position="36"/>
    </location>
</feature>
<feature type="non-terminal residue">
    <location>
        <position position="196"/>
    </location>
</feature>
<protein>
    <recommendedName>
        <fullName evidence="3">Small ribosomal subunit protein uS4c</fullName>
    </recommendedName>
    <alternativeName>
        <fullName>30S ribosomal protein S4, chloroplastic</fullName>
    </alternativeName>
</protein>
<dbReference type="EMBL" id="Z29236">
    <property type="protein sequence ID" value="CAA82435.1"/>
    <property type="molecule type" value="Genomic_DNA"/>
</dbReference>
<dbReference type="PIR" id="S41263">
    <property type="entry name" value="S41263"/>
</dbReference>
<dbReference type="SMR" id="P69640"/>
<dbReference type="GO" id="GO:0009507">
    <property type="term" value="C:chloroplast"/>
    <property type="evidence" value="ECO:0007669"/>
    <property type="project" value="UniProtKB-SubCell"/>
</dbReference>
<dbReference type="GO" id="GO:0015935">
    <property type="term" value="C:small ribosomal subunit"/>
    <property type="evidence" value="ECO:0007669"/>
    <property type="project" value="InterPro"/>
</dbReference>
<dbReference type="GO" id="GO:0019843">
    <property type="term" value="F:rRNA binding"/>
    <property type="evidence" value="ECO:0007669"/>
    <property type="project" value="UniProtKB-KW"/>
</dbReference>
<dbReference type="GO" id="GO:0003735">
    <property type="term" value="F:structural constituent of ribosome"/>
    <property type="evidence" value="ECO:0007669"/>
    <property type="project" value="InterPro"/>
</dbReference>
<dbReference type="GO" id="GO:0042274">
    <property type="term" value="P:ribosomal small subunit biogenesis"/>
    <property type="evidence" value="ECO:0007669"/>
    <property type="project" value="TreeGrafter"/>
</dbReference>
<dbReference type="GO" id="GO:0006412">
    <property type="term" value="P:translation"/>
    <property type="evidence" value="ECO:0007669"/>
    <property type="project" value="InterPro"/>
</dbReference>
<dbReference type="CDD" id="cd00165">
    <property type="entry name" value="S4"/>
    <property type="match status" value="1"/>
</dbReference>
<dbReference type="FunFam" id="1.10.1050.10:FF:000002">
    <property type="entry name" value="30S ribosomal protein S4, chloroplastic"/>
    <property type="match status" value="1"/>
</dbReference>
<dbReference type="FunFam" id="3.10.290.10:FF:000081">
    <property type="entry name" value="30S ribosomal protein S4, chloroplastic"/>
    <property type="match status" value="1"/>
</dbReference>
<dbReference type="Gene3D" id="1.10.1050.10">
    <property type="entry name" value="Ribosomal Protein S4 Delta 41, Chain A, domain 1"/>
    <property type="match status" value="1"/>
</dbReference>
<dbReference type="Gene3D" id="3.10.290.10">
    <property type="entry name" value="RNA-binding S4 domain"/>
    <property type="match status" value="1"/>
</dbReference>
<dbReference type="HAMAP" id="MF_01306_B">
    <property type="entry name" value="Ribosomal_uS4_B"/>
    <property type="match status" value="1"/>
</dbReference>
<dbReference type="InterPro" id="IPR022801">
    <property type="entry name" value="Ribosomal_uS4"/>
</dbReference>
<dbReference type="InterPro" id="IPR005709">
    <property type="entry name" value="Ribosomal_uS4_bac-type"/>
</dbReference>
<dbReference type="InterPro" id="IPR018079">
    <property type="entry name" value="Ribosomal_uS4_CS"/>
</dbReference>
<dbReference type="InterPro" id="IPR001912">
    <property type="entry name" value="Ribosomal_uS4_N"/>
</dbReference>
<dbReference type="InterPro" id="IPR002942">
    <property type="entry name" value="S4_RNA-bd"/>
</dbReference>
<dbReference type="InterPro" id="IPR036986">
    <property type="entry name" value="S4_RNA-bd_sf"/>
</dbReference>
<dbReference type="NCBIfam" id="NF003717">
    <property type="entry name" value="PRK05327.1"/>
    <property type="match status" value="1"/>
</dbReference>
<dbReference type="NCBIfam" id="TIGR01017">
    <property type="entry name" value="rpsD_bact"/>
    <property type="match status" value="1"/>
</dbReference>
<dbReference type="PANTHER" id="PTHR11831">
    <property type="entry name" value="30S 40S RIBOSOMAL PROTEIN"/>
    <property type="match status" value="1"/>
</dbReference>
<dbReference type="PANTHER" id="PTHR11831:SF4">
    <property type="entry name" value="SMALL RIBOSOMAL SUBUNIT PROTEIN US4M"/>
    <property type="match status" value="1"/>
</dbReference>
<dbReference type="Pfam" id="PF00163">
    <property type="entry name" value="Ribosomal_S4"/>
    <property type="match status" value="1"/>
</dbReference>
<dbReference type="Pfam" id="PF01479">
    <property type="entry name" value="S4"/>
    <property type="match status" value="1"/>
</dbReference>
<dbReference type="SMART" id="SM01390">
    <property type="entry name" value="Ribosomal_S4"/>
    <property type="match status" value="1"/>
</dbReference>
<dbReference type="SMART" id="SM00363">
    <property type="entry name" value="S4"/>
    <property type="match status" value="1"/>
</dbReference>
<dbReference type="SUPFAM" id="SSF55174">
    <property type="entry name" value="Alpha-L RNA-binding motif"/>
    <property type="match status" value="1"/>
</dbReference>
<dbReference type="PROSITE" id="PS00632">
    <property type="entry name" value="RIBOSOMAL_S4"/>
    <property type="match status" value="1"/>
</dbReference>
<dbReference type="PROSITE" id="PS50889">
    <property type="entry name" value="S4"/>
    <property type="match status" value="1"/>
</dbReference>
<accession>P69640</accession>
<accession>P36445</accession>
<accession>P36453</accession>
<accession>P36455</accession>
<accession>P36462</accession>
<proteinExistence type="inferred from homology"/>
<sequence>MSRYRGPRLKKIRRLGALPGLTRKTPKSGSNLKKKFHSGKKEQYRIRLQEKQKLRFHYGLTERQLLRYVHIAGKAKRSTGQVLLQLLEMRLDNILFRLGMASTIPGARQLVNHRHILVNGRIVNIPSFRCKPRDIITTKDNQRSKGLVQNFIASSDPGKLPKHLTIDTLEYKGLVNKILDRKWVGLKINELLVVEY</sequence>
<evidence type="ECO:0000250" key="1"/>
<evidence type="ECO:0000256" key="2">
    <source>
        <dbReference type="SAM" id="MobiDB-lite"/>
    </source>
</evidence>
<evidence type="ECO:0000305" key="3"/>